<sequence length="337" mass="38776">MEEIIKPVSKELLKAELTEDRRLRMTNKSNNQIYIITHQNAPNVMREIGRLREIAFRAAGGGTGLSMDIDEYDTMEHPYKQLIVWNPEAEEILGGYRYLLGTDVRFDEAGAPILATSHMFHFSDAFIKEYLPQTIELGRSFVTLEYQSTRAGSKGLFALDNLWDGLGALTVVMPNVKYFFGKVTMYPSYHRRGRDMILYFLKKHFNDREELVTPMEPLILETSDEELRTLFCKDTFKEDYKILNTEIRKLGYNIPPLVNAYMSLSPTMRMFGTAINYEFGDVEETGILIAVDEILEDKRIRHIQTFIESHPDALKMPCESEGVFTPKVVTPQEGCCH</sequence>
<dbReference type="EC" id="2.3.2.-" evidence="4"/>
<dbReference type="EMBL" id="AE015928">
    <property type="protein sequence ID" value="AAO78565.1"/>
    <property type="molecule type" value="Genomic_DNA"/>
</dbReference>
<dbReference type="RefSeq" id="NP_812371.1">
    <property type="nucleotide sequence ID" value="NC_004663.1"/>
</dbReference>
<dbReference type="RefSeq" id="WP_008763724.1">
    <property type="nucleotide sequence ID" value="NZ_UYXG01000003.1"/>
</dbReference>
<dbReference type="STRING" id="226186.BT_3459"/>
<dbReference type="PaxDb" id="226186-BT_3459"/>
<dbReference type="EnsemblBacteria" id="AAO78565">
    <property type="protein sequence ID" value="AAO78565"/>
    <property type="gene ID" value="BT_3459"/>
</dbReference>
<dbReference type="KEGG" id="bth:BT_3459"/>
<dbReference type="PATRIC" id="fig|226186.12.peg.3526"/>
<dbReference type="eggNOG" id="COG3176">
    <property type="taxonomic scope" value="Bacteria"/>
</dbReference>
<dbReference type="HOGENOM" id="CLU_033329_0_0_10"/>
<dbReference type="InParanoid" id="Q8A247"/>
<dbReference type="OrthoDB" id="1113830at2"/>
<dbReference type="Proteomes" id="UP000001414">
    <property type="component" value="Chromosome"/>
</dbReference>
<dbReference type="GO" id="GO:0016746">
    <property type="term" value="F:acyltransferase activity"/>
    <property type="evidence" value="ECO:0007669"/>
    <property type="project" value="UniProtKB-KW"/>
</dbReference>
<dbReference type="GO" id="GO:0006629">
    <property type="term" value="P:lipid metabolic process"/>
    <property type="evidence" value="ECO:0007669"/>
    <property type="project" value="UniProtKB-KW"/>
</dbReference>
<dbReference type="InterPro" id="IPR016181">
    <property type="entry name" value="Acyl_CoA_acyltransferase"/>
</dbReference>
<dbReference type="InterPro" id="IPR052351">
    <property type="entry name" value="Ornithine_N-alpha-AT"/>
</dbReference>
<dbReference type="PANTHER" id="PTHR37323">
    <property type="entry name" value="GCN5-RELATED N-ACETYLTRANSFERASE"/>
    <property type="match status" value="1"/>
</dbReference>
<dbReference type="PANTHER" id="PTHR37323:SF1">
    <property type="entry name" value="L-ORNITHINE N(ALPHA)-ACYLTRANSFERASE"/>
    <property type="match status" value="1"/>
</dbReference>
<dbReference type="Pfam" id="PF13444">
    <property type="entry name" value="Acetyltransf_5"/>
    <property type="match status" value="1"/>
</dbReference>
<dbReference type="SUPFAM" id="SSF55729">
    <property type="entry name" value="Acyl-CoA N-acyltransferases (Nat)"/>
    <property type="match status" value="1"/>
</dbReference>
<accession>Q8A247</accession>
<protein>
    <recommendedName>
        <fullName evidence="4">Glycine N(alpha)-acyltransferase</fullName>
        <ecNumber evidence="4">2.3.2.-</ecNumber>
    </recommendedName>
</protein>
<evidence type="ECO:0000269" key="1">
    <source>
    </source>
</evidence>
<evidence type="ECO:0000303" key="2">
    <source>
    </source>
</evidence>
<evidence type="ECO:0000305" key="3"/>
<evidence type="ECO:0000305" key="4">
    <source>
    </source>
</evidence>
<evidence type="ECO:0000312" key="5">
    <source>
        <dbReference type="EMBL" id="AAO78565.1"/>
    </source>
</evidence>
<name>GLSB_BACTN</name>
<comment type="function">
    <text evidence="1">Is involved in the production of glycine lipids (GL), which are phosphorus-free membrane lipids important for fitness during growth of the human gut bacterium B.thetaiotaomicron in vivo and in vitro. Catalyzes the first step of GL biosynthesis, i.e. the N-acylation of glycine via addition of a 3-hydroxy fatty acyl group, to form a range of monoacylated glycine (also named lyso-glycine lipids or lyso-GL). Is important for the ability of B.thetaiotaomicron to adapt to stress and colonize the mammalian gut. Also seems to be required for the production of flavolipin, an acylated serine-glycine dipeptide.</text>
</comment>
<comment type="catalytic activity">
    <reaction evidence="4">
        <text>a (3R)-hydroxyacyl-[ACP] + glycine = a lyso-glycine lipid + holo-[ACP] + H(+)</text>
        <dbReference type="Rhea" id="RHEA:80947"/>
        <dbReference type="Rhea" id="RHEA-COMP:9685"/>
        <dbReference type="Rhea" id="RHEA-COMP:9945"/>
        <dbReference type="ChEBI" id="CHEBI:15378"/>
        <dbReference type="ChEBI" id="CHEBI:57305"/>
        <dbReference type="ChEBI" id="CHEBI:64479"/>
        <dbReference type="ChEBI" id="CHEBI:78827"/>
        <dbReference type="ChEBI" id="CHEBI:231742"/>
    </reaction>
    <physiologicalReaction direction="left-to-right" evidence="1">
        <dbReference type="Rhea" id="RHEA:80948"/>
    </physiologicalReaction>
</comment>
<comment type="catalytic activity">
    <reaction evidence="4">
        <text>(3R)-hydroxyhexadecanoyl-[ACP] + glycine = N-[(3R)-3-hydroxyhexadecanoyl]-glycine + holo-[ACP] + H(+)</text>
        <dbReference type="Rhea" id="RHEA:80955"/>
        <dbReference type="Rhea" id="RHEA-COMP:9650"/>
        <dbReference type="Rhea" id="RHEA-COMP:9685"/>
        <dbReference type="ChEBI" id="CHEBI:15378"/>
        <dbReference type="ChEBI" id="CHEBI:57305"/>
        <dbReference type="ChEBI" id="CHEBI:64479"/>
        <dbReference type="ChEBI" id="CHEBI:78480"/>
        <dbReference type="ChEBI" id="CHEBI:231743"/>
    </reaction>
    <physiologicalReaction direction="left-to-right" evidence="1">
        <dbReference type="Rhea" id="RHEA:80956"/>
    </physiologicalReaction>
</comment>
<comment type="pathway">
    <text evidence="1">Lipid metabolism.</text>
</comment>
<comment type="induction">
    <text evidence="1">Is constitutively expressed.</text>
</comment>
<comment type="disruption phenotype">
    <text evidence="1">Loss of production of monoacylated and diacylated glycine lipids, as well as other lipids such as flavolipin, an acylated serine-glycine dipeptide. Cells lacking this gene also show a strong growth defect when transition from growth in solid medium to growth in liquid medium, and are much more sensitive to a variety of stresses, including exposure to bile and air. The deletion mutant is also affected in its ability to colonize the murine gut, particularly during the early stages of colonization. Moreover, in contrast to the wild-type, the deletion mutant produces decreased levels of both acetate and succinate while in the cecum.</text>
</comment>
<comment type="similarity">
    <text evidence="3">Belongs to the acetyltransferase family.</text>
</comment>
<organism>
    <name type="scientific">Bacteroides thetaiotaomicron (strain ATCC 29148 / DSM 2079 / JCM 5827 / CCUG 10774 / NCTC 10582 / VPI-5482 / E50)</name>
    <dbReference type="NCBI Taxonomy" id="226186"/>
    <lineage>
        <taxon>Bacteria</taxon>
        <taxon>Pseudomonadati</taxon>
        <taxon>Bacteroidota</taxon>
        <taxon>Bacteroidia</taxon>
        <taxon>Bacteroidales</taxon>
        <taxon>Bacteroidaceae</taxon>
        <taxon>Bacteroides</taxon>
    </lineage>
</organism>
<keyword id="KW-0012">Acyltransferase</keyword>
<keyword id="KW-0444">Lipid biosynthesis</keyword>
<keyword id="KW-0443">Lipid metabolism</keyword>
<keyword id="KW-1185">Reference proteome</keyword>
<keyword id="KW-0808">Transferase</keyword>
<gene>
    <name evidence="2" type="primary">glsB</name>
    <name type="synonym">choA</name>
    <name evidence="5" type="ordered locus">BT_3459</name>
</gene>
<proteinExistence type="evidence at transcript level"/>
<reference key="1">
    <citation type="journal article" date="2003" name="Science">
        <title>A genomic view of the human-Bacteroides thetaiotaomicron symbiosis.</title>
        <authorList>
            <person name="Xu J."/>
            <person name="Bjursell M.K."/>
            <person name="Himrod J."/>
            <person name="Deng S."/>
            <person name="Carmichael L.K."/>
            <person name="Chiang H.C."/>
            <person name="Hooper L.V."/>
            <person name="Gordon J.I."/>
        </authorList>
    </citation>
    <scope>NUCLEOTIDE SEQUENCE [LARGE SCALE GENOMIC DNA]</scope>
    <source>
        <strain>ATCC 29148 / DSM 2079 / JCM 5827 / CCUG 10774 / NCTC 10582 / VPI-5482 / E50</strain>
    </source>
</reference>
<reference key="2">
    <citation type="journal article" date="2009" name="Proc. Natl. Acad. Sci. U.S.A.">
        <title>Characterizing a model human gut microbiota composed of members of its two dominant bacterial phyla.</title>
        <authorList>
            <person name="Mahowald M.A."/>
            <person name="Rey F.E."/>
            <person name="Seedorf H."/>
            <person name="Turnbaugh P.J."/>
            <person name="Fulton R.S."/>
            <person name="Wollam A."/>
            <person name="Shah N."/>
            <person name="Wang C."/>
            <person name="Magrini V."/>
            <person name="Wilson R.K."/>
            <person name="Cantarel B.L."/>
            <person name="Coutinho P.M."/>
            <person name="Henrissat B."/>
            <person name="Crock L.W."/>
            <person name="Russell A."/>
            <person name="Verberkmoes N.C."/>
            <person name="Hettich R.L."/>
            <person name="Gordon J.I."/>
        </authorList>
    </citation>
    <scope>NUCLEOTIDE SEQUENCE [LARGE SCALE GENOMIC DNA]</scope>
    <source>
        <strain>ATCC 29148 / DSM 2079 / JCM 5827 / CCUG 10774 / NCTC 10582 / VPI-5482 / E50</strain>
    </source>
</reference>
<reference key="3">
    <citation type="journal article" date="2019" name="Appl. Environ. Microbiol.">
        <title>The Glycine Lipids of Bacteroides thetaiotaomicron Are Important for Fitness during Growth In Vivo and In Vitro.</title>
        <authorList>
            <person name="Lynch A."/>
            <person name="Tammireddy S.R."/>
            <person name="Doherty M.K."/>
            <person name="Whitfield P.D."/>
            <person name="Clarke D.J."/>
        </authorList>
    </citation>
    <scope>FUNCTION</scope>
    <scope>DISRUPTION PHENOTYPE</scope>
    <scope>INDUCTION</scope>
    <scope>PATHWAY</scope>
    <source>
        <strain>ATCC 29148 / DSM 2079 / JCM 5827 / CCUG 10774 / NCTC 10582 / VPI-5482 / E50</strain>
    </source>
</reference>
<feature type="chain" id="PRO_0000461300" description="Glycine N(alpha)-acyltransferase">
    <location>
        <begin position="1"/>
        <end position="337"/>
    </location>
</feature>